<name>PSAJ_POPAL</name>
<protein>
    <recommendedName>
        <fullName evidence="1">Photosystem I reaction center subunit IX</fullName>
    </recommendedName>
    <alternativeName>
        <fullName evidence="1">PSI-J</fullName>
    </alternativeName>
</protein>
<reference key="1">
    <citation type="submission" date="2005-03" db="EMBL/GenBank/DDBJ databases">
        <title>Complete structure of the chloroplast genome of Populus alba.</title>
        <authorList>
            <person name="Okumura S."/>
            <person name="Yamashita A."/>
            <person name="Kanamoto H."/>
            <person name="Hattori M."/>
            <person name="Takase H."/>
            <person name="Tomizawa K."/>
        </authorList>
    </citation>
    <scope>NUCLEOTIDE SEQUENCE [LARGE SCALE GENOMIC DNA]</scope>
</reference>
<gene>
    <name evidence="1" type="primary">psaJ</name>
</gene>
<proteinExistence type="inferred from homology"/>
<comment type="function">
    <text evidence="1">May help in the organization of the PsaE and PsaF subunits.</text>
</comment>
<comment type="subcellular location">
    <subcellularLocation>
        <location evidence="1">Plastid</location>
        <location evidence="1">Chloroplast thylakoid membrane</location>
        <topology evidence="1">Single-pass membrane protein</topology>
    </subcellularLocation>
</comment>
<comment type="similarity">
    <text evidence="1">Belongs to the PsaJ family.</text>
</comment>
<evidence type="ECO:0000255" key="1">
    <source>
        <dbReference type="HAMAP-Rule" id="MF_00522"/>
    </source>
</evidence>
<keyword id="KW-0150">Chloroplast</keyword>
<keyword id="KW-0472">Membrane</keyword>
<keyword id="KW-0602">Photosynthesis</keyword>
<keyword id="KW-0603">Photosystem I</keyword>
<keyword id="KW-0934">Plastid</keyword>
<keyword id="KW-0793">Thylakoid</keyword>
<keyword id="KW-0812">Transmembrane</keyword>
<keyword id="KW-1133">Transmembrane helix</keyword>
<sequence length="44" mass="5043">MRDLKTYLSVAPVISTLWFGSLAGLLIEINRFFPDALTFPFFSF</sequence>
<dbReference type="EMBL" id="AP008956">
    <property type="protein sequence ID" value="BAE97225.1"/>
    <property type="molecule type" value="Genomic_DNA"/>
</dbReference>
<dbReference type="RefSeq" id="YP_665578.1">
    <property type="nucleotide sequence ID" value="NC_008235.1"/>
</dbReference>
<dbReference type="SMR" id="Q14FD7"/>
<dbReference type="GeneID" id="4178157"/>
<dbReference type="KEGG" id="palz:4178157"/>
<dbReference type="OrthoDB" id="700at3646"/>
<dbReference type="GO" id="GO:0009535">
    <property type="term" value="C:chloroplast thylakoid membrane"/>
    <property type="evidence" value="ECO:0007669"/>
    <property type="project" value="UniProtKB-SubCell"/>
</dbReference>
<dbReference type="GO" id="GO:0009522">
    <property type="term" value="C:photosystem I"/>
    <property type="evidence" value="ECO:0007669"/>
    <property type="project" value="UniProtKB-KW"/>
</dbReference>
<dbReference type="GO" id="GO:0015979">
    <property type="term" value="P:photosynthesis"/>
    <property type="evidence" value="ECO:0007669"/>
    <property type="project" value="UniProtKB-UniRule"/>
</dbReference>
<dbReference type="FunFam" id="1.20.5.510:FF:000001">
    <property type="entry name" value="Photosystem I reaction center subunit IX"/>
    <property type="match status" value="1"/>
</dbReference>
<dbReference type="Gene3D" id="1.20.5.510">
    <property type="entry name" value="Single helix bin"/>
    <property type="match status" value="1"/>
</dbReference>
<dbReference type="HAMAP" id="MF_00522">
    <property type="entry name" value="PSI_PsaJ"/>
    <property type="match status" value="1"/>
</dbReference>
<dbReference type="InterPro" id="IPR002615">
    <property type="entry name" value="PSI_PsaJ"/>
</dbReference>
<dbReference type="InterPro" id="IPR036062">
    <property type="entry name" value="PSI_PsaJ_sf"/>
</dbReference>
<dbReference type="PANTHER" id="PTHR36082">
    <property type="match status" value="1"/>
</dbReference>
<dbReference type="PANTHER" id="PTHR36082:SF2">
    <property type="entry name" value="PHOTOSYSTEM I REACTION CENTER SUBUNIT IX"/>
    <property type="match status" value="1"/>
</dbReference>
<dbReference type="Pfam" id="PF01701">
    <property type="entry name" value="PSI_PsaJ"/>
    <property type="match status" value="1"/>
</dbReference>
<dbReference type="SUPFAM" id="SSF81544">
    <property type="entry name" value="Subunit IX of photosystem I reaction centre, PsaJ"/>
    <property type="match status" value="1"/>
</dbReference>
<geneLocation type="chloroplast"/>
<feature type="chain" id="PRO_0000276072" description="Photosystem I reaction center subunit IX">
    <location>
        <begin position="1"/>
        <end position="44"/>
    </location>
</feature>
<feature type="transmembrane region" description="Helical" evidence="1">
    <location>
        <begin position="7"/>
        <end position="27"/>
    </location>
</feature>
<accession>Q14FD7</accession>
<organism>
    <name type="scientific">Populus alba</name>
    <name type="common">White poplar</name>
    <dbReference type="NCBI Taxonomy" id="43335"/>
    <lineage>
        <taxon>Eukaryota</taxon>
        <taxon>Viridiplantae</taxon>
        <taxon>Streptophyta</taxon>
        <taxon>Embryophyta</taxon>
        <taxon>Tracheophyta</taxon>
        <taxon>Spermatophyta</taxon>
        <taxon>Magnoliopsida</taxon>
        <taxon>eudicotyledons</taxon>
        <taxon>Gunneridae</taxon>
        <taxon>Pentapetalae</taxon>
        <taxon>rosids</taxon>
        <taxon>fabids</taxon>
        <taxon>Malpighiales</taxon>
        <taxon>Salicaceae</taxon>
        <taxon>Saliceae</taxon>
        <taxon>Populus</taxon>
    </lineage>
</organism>